<geneLocation type="plastid"/>
<protein>
    <recommendedName>
        <fullName evidence="1">Photosystem I assembly protein Ycf3</fullName>
    </recommendedName>
</protein>
<organism>
    <name type="scientific">Cuscuta gronovii</name>
    <name type="common">Common dodder</name>
    <name type="synonym">Epithymum gronovii</name>
    <dbReference type="NCBI Taxonomy" id="35886"/>
    <lineage>
        <taxon>Eukaryota</taxon>
        <taxon>Viridiplantae</taxon>
        <taxon>Streptophyta</taxon>
        <taxon>Embryophyta</taxon>
        <taxon>Tracheophyta</taxon>
        <taxon>Spermatophyta</taxon>
        <taxon>Magnoliopsida</taxon>
        <taxon>eudicotyledons</taxon>
        <taxon>Gunneridae</taxon>
        <taxon>Pentapetalae</taxon>
        <taxon>asterids</taxon>
        <taxon>lamiids</taxon>
        <taxon>Solanales</taxon>
        <taxon>Convolvulaceae</taxon>
        <taxon>Cuscuteae</taxon>
        <taxon>Cuscuta</taxon>
        <taxon>Cuscuta subgen. Grammica</taxon>
        <taxon>Cuscuta sect. Oxycarpae</taxon>
    </lineage>
</organism>
<evidence type="ECO:0000255" key="1">
    <source>
        <dbReference type="HAMAP-Rule" id="MF_00439"/>
    </source>
</evidence>
<evidence type="ECO:0000305" key="2"/>
<name>YCF3_CUSGR</name>
<sequence>MPISQKNQNFIDRTFSIIANILLRIIPTTSGEKEAFAYYINGMSAQSEGNYAEALQNYYQAMHLEMDPYDRSYILYNIGIIHTSNGEHSKALEYYCRAIERNPFLPQAFNNMAVICHYRGEQAIQQGDSEIAEAWFDQAAEYWKQARTLTPGNYIEAQNWLTITWRSK</sequence>
<reference key="1">
    <citation type="journal article" date="2007" name="BMC Plant Biol.">
        <title>Complete DNA sequences of the plastid genomes of two parasitic flowering plant species, Cuscuta reflexa and Cuscuta gronovii.</title>
        <authorList>
            <person name="Funk H.T."/>
            <person name="Berg S."/>
            <person name="Krupinska K."/>
            <person name="Maier U.-G."/>
            <person name="Krause K."/>
        </authorList>
    </citation>
    <scope>NUCLEOTIDE SEQUENCE [LARGE SCALE GENOMIC DNA]</scope>
</reference>
<feature type="chain" id="PRO_0000325057" description="Photosystem I assembly protein Ycf3">
    <location>
        <begin position="1"/>
        <end position="168"/>
    </location>
</feature>
<feature type="repeat" description="TPR 1">
    <location>
        <begin position="35"/>
        <end position="68"/>
    </location>
</feature>
<feature type="repeat" description="TPR 2">
    <location>
        <begin position="72"/>
        <end position="105"/>
    </location>
</feature>
<feature type="repeat" description="TPR 3">
    <location>
        <begin position="120"/>
        <end position="153"/>
    </location>
</feature>
<dbReference type="EMBL" id="AM711639">
    <property type="protein sequence ID" value="CAM98330.1"/>
    <property type="molecule type" value="Genomic_DNA"/>
</dbReference>
<dbReference type="RefSeq" id="YP_001430044.1">
    <property type="nucleotide sequence ID" value="NC_009765.1"/>
</dbReference>
<dbReference type="SMR" id="A7M902"/>
<dbReference type="GeneID" id="5536770"/>
<dbReference type="GO" id="GO:0042170">
    <property type="term" value="C:plastid membrane"/>
    <property type="evidence" value="ECO:0007669"/>
    <property type="project" value="UniProtKB-SubCell"/>
</dbReference>
<dbReference type="GO" id="GO:0042651">
    <property type="term" value="C:thylakoid membrane"/>
    <property type="evidence" value="ECO:0007669"/>
    <property type="project" value="UniProtKB-UniRule"/>
</dbReference>
<dbReference type="GO" id="GO:0015979">
    <property type="term" value="P:photosynthesis"/>
    <property type="evidence" value="ECO:0007669"/>
    <property type="project" value="UniProtKB-UniRule"/>
</dbReference>
<dbReference type="FunFam" id="1.25.40.10:FF:000004">
    <property type="entry name" value="Photosystem I assembly protein Ycf3"/>
    <property type="match status" value="1"/>
</dbReference>
<dbReference type="Gene3D" id="1.25.40.10">
    <property type="entry name" value="Tetratricopeptide repeat domain"/>
    <property type="match status" value="1"/>
</dbReference>
<dbReference type="HAMAP" id="MF_00439">
    <property type="entry name" value="Ycf3"/>
    <property type="match status" value="1"/>
</dbReference>
<dbReference type="InterPro" id="IPR022818">
    <property type="entry name" value="PSI_Ycf3_assembly"/>
</dbReference>
<dbReference type="InterPro" id="IPR011990">
    <property type="entry name" value="TPR-like_helical_dom_sf"/>
</dbReference>
<dbReference type="InterPro" id="IPR019734">
    <property type="entry name" value="TPR_rpt"/>
</dbReference>
<dbReference type="InterPro" id="IPR051685">
    <property type="entry name" value="Ycf3/AcsC/BcsC/TPR_MFPF"/>
</dbReference>
<dbReference type="NCBIfam" id="NF002725">
    <property type="entry name" value="PRK02603.1"/>
    <property type="match status" value="1"/>
</dbReference>
<dbReference type="PANTHER" id="PTHR44943">
    <property type="entry name" value="CELLULOSE SYNTHASE OPERON PROTEIN C"/>
    <property type="match status" value="1"/>
</dbReference>
<dbReference type="PANTHER" id="PTHR44943:SF8">
    <property type="entry name" value="TPR REPEAT-CONTAINING PROTEIN MJ0263"/>
    <property type="match status" value="1"/>
</dbReference>
<dbReference type="Pfam" id="PF13424">
    <property type="entry name" value="TPR_12"/>
    <property type="match status" value="1"/>
</dbReference>
<dbReference type="SMART" id="SM00028">
    <property type="entry name" value="TPR"/>
    <property type="match status" value="3"/>
</dbReference>
<dbReference type="SUPFAM" id="SSF48452">
    <property type="entry name" value="TPR-like"/>
    <property type="match status" value="1"/>
</dbReference>
<dbReference type="PROSITE" id="PS50005">
    <property type="entry name" value="TPR"/>
    <property type="match status" value="3"/>
</dbReference>
<dbReference type="PROSITE" id="PS50293">
    <property type="entry name" value="TPR_REGION"/>
    <property type="match status" value="1"/>
</dbReference>
<keyword id="KW-0472">Membrane</keyword>
<keyword id="KW-0602">Photosynthesis</keyword>
<keyword id="KW-0934">Plastid</keyword>
<keyword id="KW-0677">Repeat</keyword>
<keyword id="KW-0802">TPR repeat</keyword>
<comment type="function">
    <text evidence="1">Essential for the assembly of the photosystem I (PSI) complex. May act as a chaperone-like factor to guide the assembly of the PSI subunits.</text>
</comment>
<comment type="subcellular location">
    <subcellularLocation>
        <location evidence="2">Plastid membrane</location>
        <topology evidence="1">Peripheral membrane protein</topology>
    </subcellularLocation>
</comment>
<comment type="similarity">
    <text evidence="1">Belongs to the Ycf3 family.</text>
</comment>
<comment type="caution">
    <text evidence="2">Young tissue from this organism is photosynthetic and contains some thylakoids, although the photosynthetic activity does not exceed the light compensation point.</text>
</comment>
<proteinExistence type="inferred from homology"/>
<gene>
    <name evidence="1" type="primary">ycf3</name>
</gene>
<accession>A7M902</accession>